<proteinExistence type="inferred from homology"/>
<reference key="1">
    <citation type="submission" date="2006-08" db="EMBL/GenBank/DDBJ databases">
        <title>Complete sequence of Shewanella frigidimarina NCIMB 400.</title>
        <authorList>
            <consortium name="US DOE Joint Genome Institute"/>
            <person name="Copeland A."/>
            <person name="Lucas S."/>
            <person name="Lapidus A."/>
            <person name="Barry K."/>
            <person name="Detter J.C."/>
            <person name="Glavina del Rio T."/>
            <person name="Hammon N."/>
            <person name="Israni S."/>
            <person name="Dalin E."/>
            <person name="Tice H."/>
            <person name="Pitluck S."/>
            <person name="Fredrickson J.K."/>
            <person name="Kolker E."/>
            <person name="McCuel L.A."/>
            <person name="DiChristina T."/>
            <person name="Nealson K.H."/>
            <person name="Newman D."/>
            <person name="Tiedje J.M."/>
            <person name="Zhou J."/>
            <person name="Romine M.F."/>
            <person name="Culley D.E."/>
            <person name="Serres M."/>
            <person name="Chertkov O."/>
            <person name="Brettin T."/>
            <person name="Bruce D."/>
            <person name="Han C."/>
            <person name="Tapia R."/>
            <person name="Gilna P."/>
            <person name="Schmutz J."/>
            <person name="Larimer F."/>
            <person name="Land M."/>
            <person name="Hauser L."/>
            <person name="Kyrpides N."/>
            <person name="Mikhailova N."/>
            <person name="Richardson P."/>
        </authorList>
    </citation>
    <scope>NUCLEOTIDE SEQUENCE [LARGE SCALE GENOMIC DNA]</scope>
    <source>
        <strain>NCIMB 400</strain>
    </source>
</reference>
<comment type="catalytic activity">
    <reaction evidence="1">
        <text>5-amino-1-(5-phospho-D-ribosyl)imidazole-4-carboxylate + L-aspartate + ATP = (2S)-2-[5-amino-1-(5-phospho-beta-D-ribosyl)imidazole-4-carboxamido]succinate + ADP + phosphate + 2 H(+)</text>
        <dbReference type="Rhea" id="RHEA:22628"/>
        <dbReference type="ChEBI" id="CHEBI:15378"/>
        <dbReference type="ChEBI" id="CHEBI:29991"/>
        <dbReference type="ChEBI" id="CHEBI:30616"/>
        <dbReference type="ChEBI" id="CHEBI:43474"/>
        <dbReference type="ChEBI" id="CHEBI:58443"/>
        <dbReference type="ChEBI" id="CHEBI:77657"/>
        <dbReference type="ChEBI" id="CHEBI:456216"/>
        <dbReference type="EC" id="6.3.2.6"/>
    </reaction>
</comment>
<comment type="pathway">
    <text evidence="1">Purine metabolism; IMP biosynthesis via de novo pathway; 5-amino-1-(5-phospho-D-ribosyl)imidazole-4-carboxamide from 5-amino-1-(5-phospho-D-ribosyl)imidazole-4-carboxylate: step 1/2.</text>
</comment>
<comment type="similarity">
    <text evidence="1">Belongs to the SAICAR synthetase family.</text>
</comment>
<organism>
    <name type="scientific">Shewanella frigidimarina (strain NCIMB 400)</name>
    <dbReference type="NCBI Taxonomy" id="318167"/>
    <lineage>
        <taxon>Bacteria</taxon>
        <taxon>Pseudomonadati</taxon>
        <taxon>Pseudomonadota</taxon>
        <taxon>Gammaproteobacteria</taxon>
        <taxon>Alteromonadales</taxon>
        <taxon>Shewanellaceae</taxon>
        <taxon>Shewanella</taxon>
    </lineage>
</organism>
<name>PUR7_SHEFN</name>
<evidence type="ECO:0000255" key="1">
    <source>
        <dbReference type="HAMAP-Rule" id="MF_00137"/>
    </source>
</evidence>
<keyword id="KW-0067">ATP-binding</keyword>
<keyword id="KW-0436">Ligase</keyword>
<keyword id="KW-0547">Nucleotide-binding</keyword>
<keyword id="KW-0658">Purine biosynthesis</keyword>
<keyword id="KW-1185">Reference proteome</keyword>
<gene>
    <name evidence="1" type="primary">purC</name>
    <name type="ordered locus">Sfri_3716</name>
</gene>
<protein>
    <recommendedName>
        <fullName evidence="1">Phosphoribosylaminoimidazole-succinocarboxamide synthase</fullName>
        <ecNumber evidence="1">6.3.2.6</ecNumber>
    </recommendedName>
    <alternativeName>
        <fullName evidence="1">SAICAR synthetase</fullName>
    </alternativeName>
</protein>
<accession>Q07WS1</accession>
<sequence>MSLADSVLAVNNDLPIRTDKPVHSGKVRSVYWLTDTDSRRLIRDKGYDVPEDTPLAIMVISDRISAFDCIFHGEGDLQGIPGKGAALNAISNHWFGLFAENGLADSHILDIPHPFVWIVQKARPIKVEAICRQYITGSMWRAYSKGERVFCGITLPEGLSKDQKLPELLITPSTKGILTGIPGVPAQDDVNISRSDIEANYQAFGFEKPQDIDLYETLLKQGFKVISDALAKLDQVFVDTKFEFGYVNDKNGQSKLIYMDEVGTPDSSRIWDGAAYREGKIVENSKEGFRQFLLNHFDDADILLNKDRMPEREALARDNDLPLDAMMNVSRTYIGVAEKVTGSSIPLPANPKADIIKVLREQYDLIV</sequence>
<feature type="chain" id="PRO_1000117848" description="Phosphoribosylaminoimidazole-succinocarboxamide synthase">
    <location>
        <begin position="1"/>
        <end position="367"/>
    </location>
</feature>
<dbReference type="EC" id="6.3.2.6" evidence="1"/>
<dbReference type="EMBL" id="CP000447">
    <property type="protein sequence ID" value="ABI73543.1"/>
    <property type="molecule type" value="Genomic_DNA"/>
</dbReference>
<dbReference type="RefSeq" id="WP_011639131.1">
    <property type="nucleotide sequence ID" value="NC_008345.1"/>
</dbReference>
<dbReference type="SMR" id="Q07WS1"/>
<dbReference type="STRING" id="318167.Sfri_3716"/>
<dbReference type="KEGG" id="sfr:Sfri_3716"/>
<dbReference type="eggNOG" id="COG0152">
    <property type="taxonomic scope" value="Bacteria"/>
</dbReference>
<dbReference type="HOGENOM" id="CLU_064197_0_0_6"/>
<dbReference type="OrthoDB" id="9801549at2"/>
<dbReference type="UniPathway" id="UPA00074">
    <property type="reaction ID" value="UER00131"/>
</dbReference>
<dbReference type="Proteomes" id="UP000000684">
    <property type="component" value="Chromosome"/>
</dbReference>
<dbReference type="GO" id="GO:0005737">
    <property type="term" value="C:cytoplasm"/>
    <property type="evidence" value="ECO:0007669"/>
    <property type="project" value="TreeGrafter"/>
</dbReference>
<dbReference type="GO" id="GO:0005524">
    <property type="term" value="F:ATP binding"/>
    <property type="evidence" value="ECO:0007669"/>
    <property type="project" value="UniProtKB-KW"/>
</dbReference>
<dbReference type="GO" id="GO:0004639">
    <property type="term" value="F:phosphoribosylaminoimidazolesuccinocarboxamide synthase activity"/>
    <property type="evidence" value="ECO:0007669"/>
    <property type="project" value="UniProtKB-UniRule"/>
</dbReference>
<dbReference type="GO" id="GO:0006189">
    <property type="term" value="P:'de novo' IMP biosynthetic process"/>
    <property type="evidence" value="ECO:0007669"/>
    <property type="project" value="UniProtKB-UniRule"/>
</dbReference>
<dbReference type="CDD" id="cd01414">
    <property type="entry name" value="SAICAR_synt_Sc"/>
    <property type="match status" value="1"/>
</dbReference>
<dbReference type="Gene3D" id="3.30.470.20">
    <property type="entry name" value="ATP-grasp fold, B domain"/>
    <property type="match status" value="1"/>
</dbReference>
<dbReference type="Gene3D" id="3.30.200.20">
    <property type="entry name" value="Phosphorylase Kinase, domain 1"/>
    <property type="match status" value="1"/>
</dbReference>
<dbReference type="HAMAP" id="MF_00137">
    <property type="entry name" value="SAICAR_synth"/>
    <property type="match status" value="1"/>
</dbReference>
<dbReference type="InterPro" id="IPR028923">
    <property type="entry name" value="SAICAR_synt/ADE2_N"/>
</dbReference>
<dbReference type="InterPro" id="IPR014106">
    <property type="entry name" value="SAICAR_synthase_Vibrio-typ"/>
</dbReference>
<dbReference type="InterPro" id="IPR018236">
    <property type="entry name" value="SAICAR_synthetase_CS"/>
</dbReference>
<dbReference type="NCBIfam" id="NF010567">
    <property type="entry name" value="PRK13960.1"/>
    <property type="match status" value="1"/>
</dbReference>
<dbReference type="NCBIfam" id="TIGR02735">
    <property type="entry name" value="purC_vibrio"/>
    <property type="match status" value="1"/>
</dbReference>
<dbReference type="PANTHER" id="PTHR43700">
    <property type="entry name" value="PHOSPHORIBOSYLAMINOIMIDAZOLE-SUCCINOCARBOXAMIDE SYNTHASE"/>
    <property type="match status" value="1"/>
</dbReference>
<dbReference type="PANTHER" id="PTHR43700:SF1">
    <property type="entry name" value="PHOSPHORIBOSYLAMINOIMIDAZOLE-SUCCINOCARBOXAMIDE SYNTHASE"/>
    <property type="match status" value="1"/>
</dbReference>
<dbReference type="Pfam" id="PF01259">
    <property type="entry name" value="SAICAR_synt"/>
    <property type="match status" value="1"/>
</dbReference>
<dbReference type="SUPFAM" id="SSF56104">
    <property type="entry name" value="SAICAR synthase-like"/>
    <property type="match status" value="1"/>
</dbReference>
<dbReference type="PROSITE" id="PS01057">
    <property type="entry name" value="SAICAR_SYNTHETASE_1"/>
    <property type="match status" value="1"/>
</dbReference>